<organism>
    <name type="scientific">Oryctolagus cuniculus</name>
    <name type="common">Rabbit</name>
    <dbReference type="NCBI Taxonomy" id="9986"/>
    <lineage>
        <taxon>Eukaryota</taxon>
        <taxon>Metazoa</taxon>
        <taxon>Chordata</taxon>
        <taxon>Craniata</taxon>
        <taxon>Vertebrata</taxon>
        <taxon>Euteleostomi</taxon>
        <taxon>Mammalia</taxon>
        <taxon>Eutheria</taxon>
        <taxon>Euarchontoglires</taxon>
        <taxon>Glires</taxon>
        <taxon>Lagomorpha</taxon>
        <taxon>Leporidae</taxon>
        <taxon>Oryctolagus</taxon>
    </lineage>
</organism>
<gene>
    <name type="primary">CCKBR</name>
</gene>
<protein>
    <recommendedName>
        <fullName>Gastrin/cholecystokinin type B receptor</fullName>
        <shortName>CCK-B receptor</shortName>
        <shortName>CCK-BR</shortName>
    </recommendedName>
    <alternativeName>
        <fullName>Cholecystokinin-2 receptor</fullName>
        <shortName>CCK2-R</shortName>
    </alternativeName>
</protein>
<keyword id="KW-1003">Cell membrane</keyword>
<keyword id="KW-1015">Disulfide bond</keyword>
<keyword id="KW-0297">G-protein coupled receptor</keyword>
<keyword id="KW-0325">Glycoprotein</keyword>
<keyword id="KW-0449">Lipoprotein</keyword>
<keyword id="KW-0472">Membrane</keyword>
<keyword id="KW-0564">Palmitate</keyword>
<keyword id="KW-0675">Receptor</keyword>
<keyword id="KW-1185">Reference proteome</keyword>
<keyword id="KW-0807">Transducer</keyword>
<keyword id="KW-0812">Transmembrane</keyword>
<keyword id="KW-1133">Transmembrane helix</keyword>
<comment type="function">
    <text>Receptor for gastrin and cholecystokinin. The CCK-B receptors occur throughout the central nervous system where they modulate anxiety, analgesia, arousal, and neuroleptic activity. This receptor mediates its action by association with G proteins that activate a phosphatidylinositol-calcium second messenger system.</text>
</comment>
<comment type="subcellular location">
    <subcellularLocation>
        <location>Cell membrane</location>
        <topology>Multi-pass membrane protein</topology>
    </subcellularLocation>
</comment>
<comment type="similarity">
    <text evidence="3">Belongs to the G-protein coupled receptor 1 family.</text>
</comment>
<sequence>MELVKLNRSVQGSGPVASLCRPGGPLLNNSGTGNLSCEPPRIRGAGTRELELAIRVTLYAVIFLMSVGGNILIIVVLGLSRRLRTVTNAFLLSLAVSDLLLAVACMPFTLLPNLMGTFIFGTVICKAVSYLMGVSVSVSTLSLVAIALERYSAICRPLQARVWQTRSHAARVILATWLLSGLLMVPYPVYTAVQPVGPRVLQCVHRWPSARVRQTWSVLLLLLLFFVPGVVMAVAYGLISRELYLGLRFDSDSDSESQSRVRGQGGLPGGAAPGPVHQNGRCRPEAGLAGEDGDGCYVQLPRSRPALELSALTAPISGPGPGPRPAQAKLLAKKRVVRMLLVIVVLFFMCWLPVYSANTWRAFDGPGAHRALSGAPISFIHLLSYASACVNPLVYCFMHRRFRQACLDTCARCCPRPPRARPRPLPDEDPPTPSIASLSRLSYTTISTLGPG</sequence>
<name>GASR_RABIT</name>
<accession>P46627</accession>
<reference key="1">
    <citation type="journal article" date="1994" name="Biochem. Biophys. Res. Commun.">
        <title>Molecular cloning and structural analysis of the rabbit gastrin/CCKB receptor gene.</title>
        <authorList>
            <person name="Blandizzi C."/>
            <person name="Song I."/>
            <person name="Yamada T."/>
        </authorList>
    </citation>
    <scope>NUCLEOTIDE SEQUENCE [GENOMIC DNA]</scope>
    <source>
        <tissue>Liver</tissue>
    </source>
</reference>
<dbReference type="EMBL" id="L31548">
    <property type="protein sequence ID" value="AAA31194.1"/>
    <property type="molecule type" value="Genomic_DNA"/>
</dbReference>
<dbReference type="EMBL" id="L31547">
    <property type="protein sequence ID" value="AAA31194.1"/>
    <property type="status" value="JOINED"/>
    <property type="molecule type" value="Genomic_DNA"/>
</dbReference>
<dbReference type="PIR" id="JC2459">
    <property type="entry name" value="JC2459"/>
</dbReference>
<dbReference type="SMR" id="P46627"/>
<dbReference type="FunCoup" id="P46627">
    <property type="interactions" value="172"/>
</dbReference>
<dbReference type="STRING" id="9986.ENSOCUP00000006740"/>
<dbReference type="GlyCosmos" id="P46627">
    <property type="glycosylation" value="3 sites, No reported glycans"/>
</dbReference>
<dbReference type="PaxDb" id="9986-ENSOCUP00000006740"/>
<dbReference type="eggNOG" id="KOG3656">
    <property type="taxonomic scope" value="Eukaryota"/>
</dbReference>
<dbReference type="InParanoid" id="P46627"/>
<dbReference type="Proteomes" id="UP000001811">
    <property type="component" value="Unplaced"/>
</dbReference>
<dbReference type="GO" id="GO:0005886">
    <property type="term" value="C:plasma membrane"/>
    <property type="evidence" value="ECO:0007669"/>
    <property type="project" value="UniProtKB-SubCell"/>
</dbReference>
<dbReference type="GO" id="GO:0015054">
    <property type="term" value="F:gastrin receptor activity"/>
    <property type="evidence" value="ECO:0000250"/>
    <property type="project" value="UniProtKB"/>
</dbReference>
<dbReference type="GO" id="GO:0008188">
    <property type="term" value="F:neuropeptide receptor activity"/>
    <property type="evidence" value="ECO:0007669"/>
    <property type="project" value="TreeGrafter"/>
</dbReference>
<dbReference type="GO" id="GO:0008284">
    <property type="term" value="P:positive regulation of cell population proliferation"/>
    <property type="evidence" value="ECO:0000250"/>
    <property type="project" value="UniProtKB"/>
</dbReference>
<dbReference type="GO" id="GO:0007204">
    <property type="term" value="P:positive regulation of cytosolic calcium ion concentration"/>
    <property type="evidence" value="ECO:0000250"/>
    <property type="project" value="UniProtKB"/>
</dbReference>
<dbReference type="Gene3D" id="1.20.1070.10">
    <property type="entry name" value="Rhodopsin 7-helix transmembrane proteins"/>
    <property type="match status" value="1"/>
</dbReference>
<dbReference type="InterPro" id="IPR009126">
    <property type="entry name" value="Cholcskin_rcpt"/>
</dbReference>
<dbReference type="InterPro" id="IPR000314">
    <property type="entry name" value="Gastrin_rcpt"/>
</dbReference>
<dbReference type="InterPro" id="IPR000276">
    <property type="entry name" value="GPCR_Rhodpsn"/>
</dbReference>
<dbReference type="InterPro" id="IPR017452">
    <property type="entry name" value="GPCR_Rhodpsn_7TM"/>
</dbReference>
<dbReference type="PANTHER" id="PTHR24243">
    <property type="entry name" value="G-PROTEIN COUPLED RECEPTOR"/>
    <property type="match status" value="1"/>
</dbReference>
<dbReference type="PANTHER" id="PTHR24243:SF45">
    <property type="entry name" value="GASTRIN_CHOLECYSTOKININ TYPE B RECEPTOR"/>
    <property type="match status" value="1"/>
</dbReference>
<dbReference type="Pfam" id="PF00001">
    <property type="entry name" value="7tm_1"/>
    <property type="match status" value="1"/>
</dbReference>
<dbReference type="PRINTS" id="PR01822">
    <property type="entry name" value="CCYSTOKININR"/>
</dbReference>
<dbReference type="PRINTS" id="PR00527">
    <property type="entry name" value="GASTRINR"/>
</dbReference>
<dbReference type="PRINTS" id="PR00237">
    <property type="entry name" value="GPCRRHODOPSN"/>
</dbReference>
<dbReference type="SUPFAM" id="SSF81321">
    <property type="entry name" value="Family A G protein-coupled receptor-like"/>
    <property type="match status" value="1"/>
</dbReference>
<dbReference type="PROSITE" id="PS00237">
    <property type="entry name" value="G_PROTEIN_RECEP_F1_1"/>
    <property type="match status" value="1"/>
</dbReference>
<dbReference type="PROSITE" id="PS50262">
    <property type="entry name" value="G_PROTEIN_RECEP_F1_2"/>
    <property type="match status" value="1"/>
</dbReference>
<feature type="chain" id="PRO_0000069477" description="Gastrin/cholecystokinin type B receptor">
    <location>
        <begin position="1"/>
        <end position="452"/>
    </location>
</feature>
<feature type="topological domain" description="Extracellular" evidence="2">
    <location>
        <begin position="1"/>
        <end position="55"/>
    </location>
</feature>
<feature type="transmembrane region" description="Helical; Name=1" evidence="2">
    <location>
        <begin position="56"/>
        <end position="77"/>
    </location>
</feature>
<feature type="topological domain" description="Cytoplasmic" evidence="2">
    <location>
        <begin position="78"/>
        <end position="85"/>
    </location>
</feature>
<feature type="transmembrane region" description="Helical; Name=2" evidence="2">
    <location>
        <begin position="86"/>
        <end position="107"/>
    </location>
</feature>
<feature type="topological domain" description="Extracellular" evidence="2">
    <location>
        <begin position="108"/>
        <end position="129"/>
    </location>
</feature>
<feature type="transmembrane region" description="Helical; Name=3" evidence="2">
    <location>
        <begin position="130"/>
        <end position="148"/>
    </location>
</feature>
<feature type="topological domain" description="Cytoplasmic" evidence="2">
    <location>
        <begin position="149"/>
        <end position="168"/>
    </location>
</feature>
<feature type="transmembrane region" description="Helical; Name=4" evidence="2">
    <location>
        <begin position="169"/>
        <end position="187"/>
    </location>
</feature>
<feature type="topological domain" description="Extracellular" evidence="2">
    <location>
        <begin position="188"/>
        <end position="217"/>
    </location>
</feature>
<feature type="transmembrane region" description="Helical; Name=5" evidence="2">
    <location>
        <begin position="218"/>
        <end position="240"/>
    </location>
</feature>
<feature type="topological domain" description="Cytoplasmic" evidence="2">
    <location>
        <begin position="241"/>
        <end position="338"/>
    </location>
</feature>
<feature type="transmembrane region" description="Helical; Name=6" evidence="2">
    <location>
        <begin position="339"/>
        <end position="360"/>
    </location>
</feature>
<feature type="topological domain" description="Extracellular" evidence="2">
    <location>
        <begin position="361"/>
        <end position="378"/>
    </location>
</feature>
<feature type="transmembrane region" description="Helical; Name=7" evidence="2">
    <location>
        <begin position="379"/>
        <end position="399"/>
    </location>
</feature>
<feature type="topological domain" description="Cytoplasmic" evidence="2">
    <location>
        <begin position="400"/>
        <end position="452"/>
    </location>
</feature>
<feature type="region of interest" description="Disordered" evidence="4">
    <location>
        <begin position="255"/>
        <end position="285"/>
    </location>
</feature>
<feature type="compositionally biased region" description="Gly residues" evidence="4">
    <location>
        <begin position="263"/>
        <end position="272"/>
    </location>
</feature>
<feature type="lipid moiety-binding region" description="S-palmitoyl cysteine" evidence="1">
    <location>
        <position position="413"/>
    </location>
</feature>
<feature type="glycosylation site" description="N-linked (GlcNAc...) asparagine" evidence="2">
    <location>
        <position position="7"/>
    </location>
</feature>
<feature type="glycosylation site" description="N-linked (GlcNAc...) asparagine" evidence="2">
    <location>
        <position position="28"/>
    </location>
</feature>
<feature type="glycosylation site" description="N-linked (GlcNAc...) asparagine" evidence="2">
    <location>
        <position position="34"/>
    </location>
</feature>
<feature type="disulfide bond" evidence="3">
    <location>
        <begin position="125"/>
        <end position="203"/>
    </location>
</feature>
<proteinExistence type="inferred from homology"/>
<evidence type="ECO:0000250" key="1">
    <source>
        <dbReference type="UniProtKB" id="P17124"/>
    </source>
</evidence>
<evidence type="ECO:0000255" key="2"/>
<evidence type="ECO:0000255" key="3">
    <source>
        <dbReference type="PROSITE-ProRule" id="PRU00521"/>
    </source>
</evidence>
<evidence type="ECO:0000256" key="4">
    <source>
        <dbReference type="SAM" id="MobiDB-lite"/>
    </source>
</evidence>